<reference key="1">
    <citation type="journal article" date="2004" name="Nat. Biotechnol.">
        <title>The genome sequence of the capnophilic rumen bacterium Mannheimia succiniciproducens.</title>
        <authorList>
            <person name="Hong S.H."/>
            <person name="Kim J.S."/>
            <person name="Lee S.Y."/>
            <person name="In Y.H."/>
            <person name="Choi S.S."/>
            <person name="Rih J.-K."/>
            <person name="Kim C.H."/>
            <person name="Jeong H."/>
            <person name="Hur C.G."/>
            <person name="Kim J.J."/>
        </authorList>
    </citation>
    <scope>NUCLEOTIDE SEQUENCE [LARGE SCALE GENOMIC DNA]</scope>
    <source>
        <strain>KCTC 0769BP / MBEL55E</strain>
    </source>
</reference>
<evidence type="ECO:0000255" key="1">
    <source>
        <dbReference type="HAMAP-Rule" id="MF_01022"/>
    </source>
</evidence>
<dbReference type="EC" id="3.1.3.15" evidence="1"/>
<dbReference type="EC" id="4.2.1.19" evidence="1"/>
<dbReference type="EMBL" id="AE016827">
    <property type="protein sequence ID" value="AAU38497.1"/>
    <property type="molecule type" value="Genomic_DNA"/>
</dbReference>
<dbReference type="RefSeq" id="WP_011201050.1">
    <property type="nucleotide sequence ID" value="NC_006300.1"/>
</dbReference>
<dbReference type="SMR" id="Q65RB3"/>
<dbReference type="STRING" id="221988.MS1890"/>
<dbReference type="KEGG" id="msu:MS1890"/>
<dbReference type="eggNOG" id="COG0131">
    <property type="taxonomic scope" value="Bacteria"/>
</dbReference>
<dbReference type="eggNOG" id="COG0241">
    <property type="taxonomic scope" value="Bacteria"/>
</dbReference>
<dbReference type="HOGENOM" id="CLU_044308_0_0_6"/>
<dbReference type="OrthoDB" id="9790411at2"/>
<dbReference type="UniPathway" id="UPA00031">
    <property type="reaction ID" value="UER00011"/>
</dbReference>
<dbReference type="UniPathway" id="UPA00031">
    <property type="reaction ID" value="UER00013"/>
</dbReference>
<dbReference type="Proteomes" id="UP000000607">
    <property type="component" value="Chromosome"/>
</dbReference>
<dbReference type="GO" id="GO:0005737">
    <property type="term" value="C:cytoplasm"/>
    <property type="evidence" value="ECO:0007669"/>
    <property type="project" value="UniProtKB-SubCell"/>
</dbReference>
<dbReference type="GO" id="GO:0004401">
    <property type="term" value="F:histidinol-phosphatase activity"/>
    <property type="evidence" value="ECO:0007669"/>
    <property type="project" value="UniProtKB-UniRule"/>
</dbReference>
<dbReference type="GO" id="GO:0004424">
    <property type="term" value="F:imidazoleglycerol-phosphate dehydratase activity"/>
    <property type="evidence" value="ECO:0007669"/>
    <property type="project" value="UniProtKB-UniRule"/>
</dbReference>
<dbReference type="GO" id="GO:0046872">
    <property type="term" value="F:metal ion binding"/>
    <property type="evidence" value="ECO:0007669"/>
    <property type="project" value="UniProtKB-KW"/>
</dbReference>
<dbReference type="GO" id="GO:0000105">
    <property type="term" value="P:L-histidine biosynthetic process"/>
    <property type="evidence" value="ECO:0007669"/>
    <property type="project" value="UniProtKB-UniRule"/>
</dbReference>
<dbReference type="CDD" id="cd07503">
    <property type="entry name" value="HAD_HisB-N"/>
    <property type="match status" value="1"/>
</dbReference>
<dbReference type="CDD" id="cd07914">
    <property type="entry name" value="IGPD"/>
    <property type="match status" value="1"/>
</dbReference>
<dbReference type="FunFam" id="3.40.50.1000:FF:000061">
    <property type="entry name" value="Histidine biosynthesis bifunctional protein HisB"/>
    <property type="match status" value="1"/>
</dbReference>
<dbReference type="FunFam" id="3.30.230.40:FF:000001">
    <property type="entry name" value="Imidazoleglycerol-phosphate dehydratase HisB"/>
    <property type="match status" value="1"/>
</dbReference>
<dbReference type="FunFam" id="3.30.230.40:FF:000003">
    <property type="entry name" value="Imidazoleglycerol-phosphate dehydratase HisB"/>
    <property type="match status" value="1"/>
</dbReference>
<dbReference type="Gene3D" id="3.40.50.1000">
    <property type="entry name" value="HAD superfamily/HAD-like"/>
    <property type="match status" value="1"/>
</dbReference>
<dbReference type="Gene3D" id="3.30.230.40">
    <property type="entry name" value="Imidazole glycerol phosphate dehydratase, domain 1"/>
    <property type="match status" value="2"/>
</dbReference>
<dbReference type="HAMAP" id="MF_01022">
    <property type="entry name" value="Bifunc_HisB"/>
    <property type="match status" value="1"/>
</dbReference>
<dbReference type="HAMAP" id="MF_00076">
    <property type="entry name" value="HisB"/>
    <property type="match status" value="1"/>
</dbReference>
<dbReference type="InterPro" id="IPR036412">
    <property type="entry name" value="HAD-like_sf"/>
</dbReference>
<dbReference type="InterPro" id="IPR006549">
    <property type="entry name" value="HAD-SF_hydro_IIIA"/>
</dbReference>
<dbReference type="InterPro" id="IPR023214">
    <property type="entry name" value="HAD_sf"/>
</dbReference>
<dbReference type="InterPro" id="IPR020566">
    <property type="entry name" value="His_synth_bifunc_HisB"/>
</dbReference>
<dbReference type="InterPro" id="IPR005954">
    <property type="entry name" value="HisB_N"/>
</dbReference>
<dbReference type="InterPro" id="IPR006543">
    <property type="entry name" value="Histidinol-phos"/>
</dbReference>
<dbReference type="InterPro" id="IPR038494">
    <property type="entry name" value="IGPD_sf"/>
</dbReference>
<dbReference type="InterPro" id="IPR000807">
    <property type="entry name" value="ImidazoleglycerolP_deHydtase"/>
</dbReference>
<dbReference type="InterPro" id="IPR020565">
    <property type="entry name" value="ImidazoleglycerP_deHydtase_CS"/>
</dbReference>
<dbReference type="InterPro" id="IPR020568">
    <property type="entry name" value="Ribosomal_Su5_D2-typ_SF"/>
</dbReference>
<dbReference type="NCBIfam" id="TIGR01662">
    <property type="entry name" value="HAD-SF-IIIA"/>
    <property type="match status" value="1"/>
</dbReference>
<dbReference type="NCBIfam" id="TIGR01261">
    <property type="entry name" value="hisB_Nterm"/>
    <property type="match status" value="1"/>
</dbReference>
<dbReference type="NCBIfam" id="TIGR01656">
    <property type="entry name" value="Histidinol-ppas"/>
    <property type="match status" value="1"/>
</dbReference>
<dbReference type="NCBIfam" id="NF002111">
    <property type="entry name" value="PRK00951.2-1"/>
    <property type="match status" value="1"/>
</dbReference>
<dbReference type="NCBIfam" id="NF002114">
    <property type="entry name" value="PRK00951.2-4"/>
    <property type="match status" value="1"/>
</dbReference>
<dbReference type="NCBIfam" id="NF003937">
    <property type="entry name" value="PRK05446.1"/>
    <property type="match status" value="1"/>
</dbReference>
<dbReference type="PANTHER" id="PTHR23133:SF2">
    <property type="entry name" value="IMIDAZOLEGLYCEROL-PHOSPHATE DEHYDRATASE"/>
    <property type="match status" value="1"/>
</dbReference>
<dbReference type="PANTHER" id="PTHR23133">
    <property type="entry name" value="IMIDAZOLEGLYCEROL-PHOSPHATE DEHYDRATASE HIS7"/>
    <property type="match status" value="1"/>
</dbReference>
<dbReference type="Pfam" id="PF13242">
    <property type="entry name" value="Hydrolase_like"/>
    <property type="match status" value="1"/>
</dbReference>
<dbReference type="Pfam" id="PF00475">
    <property type="entry name" value="IGPD"/>
    <property type="match status" value="1"/>
</dbReference>
<dbReference type="SUPFAM" id="SSF56784">
    <property type="entry name" value="HAD-like"/>
    <property type="match status" value="1"/>
</dbReference>
<dbReference type="SUPFAM" id="SSF54211">
    <property type="entry name" value="Ribosomal protein S5 domain 2-like"/>
    <property type="match status" value="2"/>
</dbReference>
<dbReference type="PROSITE" id="PS00954">
    <property type="entry name" value="IGP_DEHYDRATASE_1"/>
    <property type="match status" value="1"/>
</dbReference>
<dbReference type="PROSITE" id="PS00955">
    <property type="entry name" value="IGP_DEHYDRATASE_2"/>
    <property type="match status" value="1"/>
</dbReference>
<accession>Q65RB3</accession>
<gene>
    <name evidence="1" type="primary">hisB</name>
    <name type="ordered locus">MS1890</name>
</gene>
<name>HIS7_MANSM</name>
<organism>
    <name type="scientific">Mannheimia succiniciproducens (strain KCTC 0769BP / MBEL55E)</name>
    <dbReference type="NCBI Taxonomy" id="221988"/>
    <lineage>
        <taxon>Bacteria</taxon>
        <taxon>Pseudomonadati</taxon>
        <taxon>Pseudomonadota</taxon>
        <taxon>Gammaproteobacteria</taxon>
        <taxon>Pasteurellales</taxon>
        <taxon>Pasteurellaceae</taxon>
        <taxon>Basfia</taxon>
    </lineage>
</organism>
<protein>
    <recommendedName>
        <fullName evidence="1">Histidine biosynthesis bifunctional protein HisB</fullName>
    </recommendedName>
    <domain>
        <recommendedName>
            <fullName evidence="1">Histidinol-phosphatase</fullName>
            <ecNumber evidence="1">3.1.3.15</ecNumber>
        </recommendedName>
    </domain>
    <domain>
        <recommendedName>
            <fullName evidence="1">Imidazoleglycerol-phosphate dehydratase</fullName>
            <shortName evidence="1">IGPD</shortName>
            <ecNumber evidence="1">4.2.1.19</ecNumber>
        </recommendedName>
    </domain>
</protein>
<feature type="chain" id="PRO_0000158214" description="Histidine biosynthesis bifunctional protein HisB">
    <location>
        <begin position="1"/>
        <end position="365"/>
    </location>
</feature>
<feature type="region of interest" description="Histidinol-phosphatase" evidence="1">
    <location>
        <begin position="1"/>
        <end position="176"/>
    </location>
</feature>
<feature type="region of interest" description="Imidazoleglycerol-phosphate dehydratase" evidence="1">
    <location>
        <begin position="177"/>
        <end position="365"/>
    </location>
</feature>
<feature type="active site" description="Nucleophile" evidence="1">
    <location>
        <position position="10"/>
    </location>
</feature>
<feature type="active site" description="Proton donor" evidence="1">
    <location>
        <position position="12"/>
    </location>
</feature>
<feature type="binding site" evidence="1">
    <location>
        <position position="10"/>
    </location>
    <ligand>
        <name>Mg(2+)</name>
        <dbReference type="ChEBI" id="CHEBI:18420"/>
    </ligand>
</feature>
<feature type="binding site" evidence="1">
    <location>
        <position position="12"/>
    </location>
    <ligand>
        <name>Mg(2+)</name>
        <dbReference type="ChEBI" id="CHEBI:18420"/>
    </ligand>
</feature>
<feature type="binding site" evidence="1">
    <location>
        <position position="93"/>
    </location>
    <ligand>
        <name>Zn(2+)</name>
        <dbReference type="ChEBI" id="CHEBI:29105"/>
    </ligand>
</feature>
<feature type="binding site" evidence="1">
    <location>
        <position position="95"/>
    </location>
    <ligand>
        <name>Zn(2+)</name>
        <dbReference type="ChEBI" id="CHEBI:29105"/>
    </ligand>
</feature>
<feature type="binding site" evidence="1">
    <location>
        <position position="101"/>
    </location>
    <ligand>
        <name>Zn(2+)</name>
        <dbReference type="ChEBI" id="CHEBI:29105"/>
    </ligand>
</feature>
<feature type="binding site" evidence="1">
    <location>
        <position position="103"/>
    </location>
    <ligand>
        <name>Zn(2+)</name>
        <dbReference type="ChEBI" id="CHEBI:29105"/>
    </ligand>
</feature>
<feature type="binding site" evidence="1">
    <location>
        <position position="130"/>
    </location>
    <ligand>
        <name>Mg(2+)</name>
        <dbReference type="ChEBI" id="CHEBI:18420"/>
    </ligand>
</feature>
<comment type="catalytic activity">
    <reaction evidence="1">
        <text>D-erythro-1-(imidazol-4-yl)glycerol 3-phosphate = 3-(imidazol-4-yl)-2-oxopropyl phosphate + H2O</text>
        <dbReference type="Rhea" id="RHEA:11040"/>
        <dbReference type="ChEBI" id="CHEBI:15377"/>
        <dbReference type="ChEBI" id="CHEBI:57766"/>
        <dbReference type="ChEBI" id="CHEBI:58278"/>
        <dbReference type="EC" id="4.2.1.19"/>
    </reaction>
</comment>
<comment type="catalytic activity">
    <reaction evidence="1">
        <text>L-histidinol phosphate + H2O = L-histidinol + phosphate</text>
        <dbReference type="Rhea" id="RHEA:14465"/>
        <dbReference type="ChEBI" id="CHEBI:15377"/>
        <dbReference type="ChEBI" id="CHEBI:43474"/>
        <dbReference type="ChEBI" id="CHEBI:57699"/>
        <dbReference type="ChEBI" id="CHEBI:57980"/>
        <dbReference type="EC" id="3.1.3.15"/>
    </reaction>
</comment>
<comment type="cofactor">
    <cofactor evidence="1">
        <name>Mg(2+)</name>
        <dbReference type="ChEBI" id="CHEBI:18420"/>
    </cofactor>
</comment>
<comment type="cofactor">
    <cofactor evidence="1">
        <name>Zn(2+)</name>
        <dbReference type="ChEBI" id="CHEBI:29105"/>
    </cofactor>
</comment>
<comment type="pathway">
    <text evidence="1">Amino-acid biosynthesis; L-histidine biosynthesis; L-histidine from 5-phospho-alpha-D-ribose 1-diphosphate: step 6/9.</text>
</comment>
<comment type="pathway">
    <text evidence="1">Amino-acid biosynthesis; L-histidine biosynthesis; L-histidine from 5-phospho-alpha-D-ribose 1-diphosphate: step 8/9.</text>
</comment>
<comment type="subcellular location">
    <subcellularLocation>
        <location evidence="1">Cytoplasm</location>
    </subcellularLocation>
</comment>
<comment type="similarity">
    <text evidence="1">In the N-terminal section; belongs to the histidinol-phosphatase family.</text>
</comment>
<comment type="similarity">
    <text evidence="1">In the C-terminal section; belongs to the imidazoleglycerol-phosphate dehydratase family.</text>
</comment>
<sequence length="365" mass="41336">MTQQPTLFIDRDGTLIDEPKTDFQIDSLEKLKFERNVIPALLKLKNRYRFVMVSNQDGLGTDSFPQEDFDKPHNAMLAVFRSQGIEFDDILICPHKPEDNCDCRKPKIKLLKKYIDKKLFDPADSFVIGDRPTDVQLAENLGIRALQYHPENLDWDMIAEKLLREPVADPKGLGQPRHAVVARKTKETDIKVEVWLDEAGVNQINTGIGFFDHMLDQIATHGGFRMNVSCKGDLHIDDHHTIEDVALALGAALKEAIGNKRGIQRFGFVLPMDECKAECALDLSGRPYFKFKAKFNRDKVGDFSTEMTEHFFQSIAYTLLATLHLSVKGDNAHHQIEALFKAFGRTLRQAIKIEGNEMPSSKGVL</sequence>
<keyword id="KW-0028">Amino-acid biosynthesis</keyword>
<keyword id="KW-0963">Cytoplasm</keyword>
<keyword id="KW-0368">Histidine biosynthesis</keyword>
<keyword id="KW-0378">Hydrolase</keyword>
<keyword id="KW-0456">Lyase</keyword>
<keyword id="KW-0460">Magnesium</keyword>
<keyword id="KW-0479">Metal-binding</keyword>
<keyword id="KW-0511">Multifunctional enzyme</keyword>
<keyword id="KW-0862">Zinc</keyword>
<proteinExistence type="inferred from homology"/>